<evidence type="ECO:0000255" key="1">
    <source>
        <dbReference type="HAMAP-Rule" id="MF_00270"/>
    </source>
</evidence>
<evidence type="ECO:0000305" key="2"/>
<feature type="chain" id="PRO_1000114423" description="Small ribosomal subunit protein bS18">
    <location>
        <begin position="1"/>
        <end position="85"/>
    </location>
</feature>
<protein>
    <recommendedName>
        <fullName evidence="1">Small ribosomal subunit protein bS18</fullName>
    </recommendedName>
    <alternativeName>
        <fullName evidence="2">30S ribosomal protein S18</fullName>
    </alternativeName>
</protein>
<proteinExistence type="inferred from homology"/>
<organism>
    <name type="scientific">Helicobacter pylori (strain P12)</name>
    <dbReference type="NCBI Taxonomy" id="570508"/>
    <lineage>
        <taxon>Bacteria</taxon>
        <taxon>Pseudomonadati</taxon>
        <taxon>Campylobacterota</taxon>
        <taxon>Epsilonproteobacteria</taxon>
        <taxon>Campylobacterales</taxon>
        <taxon>Helicobacteraceae</taxon>
        <taxon>Helicobacter</taxon>
    </lineage>
</organism>
<comment type="function">
    <text evidence="1">Binds as a heterodimer with protein bS6 to the central domain of the 16S rRNA, where it helps stabilize the platform of the 30S subunit.</text>
</comment>
<comment type="subunit">
    <text evidence="1">Part of the 30S ribosomal subunit. Forms a tight heterodimer with protein bS6.</text>
</comment>
<comment type="similarity">
    <text evidence="1">Belongs to the bacterial ribosomal protein bS18 family.</text>
</comment>
<gene>
    <name evidence="1" type="primary">rpsR</name>
    <name type="ordered locus">HPP12_1210</name>
</gene>
<accession>B6JN84</accession>
<dbReference type="EMBL" id="CP001217">
    <property type="protein sequence ID" value="ACJ08362.1"/>
    <property type="molecule type" value="Genomic_DNA"/>
</dbReference>
<dbReference type="SMR" id="B6JN84"/>
<dbReference type="KEGG" id="hpp:HPP12_1210"/>
<dbReference type="HOGENOM" id="CLU_148710_2_2_7"/>
<dbReference type="Proteomes" id="UP000008198">
    <property type="component" value="Chromosome"/>
</dbReference>
<dbReference type="GO" id="GO:0022627">
    <property type="term" value="C:cytosolic small ribosomal subunit"/>
    <property type="evidence" value="ECO:0007669"/>
    <property type="project" value="TreeGrafter"/>
</dbReference>
<dbReference type="GO" id="GO:0070181">
    <property type="term" value="F:small ribosomal subunit rRNA binding"/>
    <property type="evidence" value="ECO:0007669"/>
    <property type="project" value="TreeGrafter"/>
</dbReference>
<dbReference type="GO" id="GO:0003735">
    <property type="term" value="F:structural constituent of ribosome"/>
    <property type="evidence" value="ECO:0007669"/>
    <property type="project" value="InterPro"/>
</dbReference>
<dbReference type="GO" id="GO:0006412">
    <property type="term" value="P:translation"/>
    <property type="evidence" value="ECO:0007669"/>
    <property type="project" value="UniProtKB-UniRule"/>
</dbReference>
<dbReference type="FunFam" id="4.10.640.10:FF:000005">
    <property type="entry name" value="30S ribosomal protein S18"/>
    <property type="match status" value="1"/>
</dbReference>
<dbReference type="Gene3D" id="4.10.640.10">
    <property type="entry name" value="Ribosomal protein S18"/>
    <property type="match status" value="1"/>
</dbReference>
<dbReference type="HAMAP" id="MF_00270">
    <property type="entry name" value="Ribosomal_bS18"/>
    <property type="match status" value="1"/>
</dbReference>
<dbReference type="InterPro" id="IPR001648">
    <property type="entry name" value="Ribosomal_bS18"/>
</dbReference>
<dbReference type="InterPro" id="IPR018275">
    <property type="entry name" value="Ribosomal_bS18_CS"/>
</dbReference>
<dbReference type="InterPro" id="IPR036870">
    <property type="entry name" value="Ribosomal_bS18_sf"/>
</dbReference>
<dbReference type="NCBIfam" id="TIGR00165">
    <property type="entry name" value="S18"/>
    <property type="match status" value="1"/>
</dbReference>
<dbReference type="PANTHER" id="PTHR13479">
    <property type="entry name" value="30S RIBOSOMAL PROTEIN S18"/>
    <property type="match status" value="1"/>
</dbReference>
<dbReference type="PANTHER" id="PTHR13479:SF40">
    <property type="entry name" value="SMALL RIBOSOMAL SUBUNIT PROTEIN BS18M"/>
    <property type="match status" value="1"/>
</dbReference>
<dbReference type="Pfam" id="PF01084">
    <property type="entry name" value="Ribosomal_S18"/>
    <property type="match status" value="1"/>
</dbReference>
<dbReference type="PRINTS" id="PR00974">
    <property type="entry name" value="RIBOSOMALS18"/>
</dbReference>
<dbReference type="SUPFAM" id="SSF46911">
    <property type="entry name" value="Ribosomal protein S18"/>
    <property type="match status" value="1"/>
</dbReference>
<dbReference type="PROSITE" id="PS00057">
    <property type="entry name" value="RIBOSOMAL_S18"/>
    <property type="match status" value="1"/>
</dbReference>
<reference key="1">
    <citation type="submission" date="2008-10" db="EMBL/GenBank/DDBJ databases">
        <title>The complete genome sequence of Helicobacter pylori strain P12.</title>
        <authorList>
            <person name="Fischer W."/>
            <person name="Windhager L."/>
            <person name="Karnholz A."/>
            <person name="Zeiller M."/>
            <person name="Zimmer R."/>
            <person name="Haas R."/>
        </authorList>
    </citation>
    <scope>NUCLEOTIDE SEQUENCE [LARGE SCALE GENOMIC DNA]</scope>
    <source>
        <strain>P12</strain>
    </source>
</reference>
<name>RS18_HELP2</name>
<keyword id="KW-0687">Ribonucleoprotein</keyword>
<keyword id="KW-0689">Ribosomal protein</keyword>
<keyword id="KW-0694">RNA-binding</keyword>
<keyword id="KW-0699">rRNA-binding</keyword>
<sequence length="85" mass="10448">MERKRYSKRYCKYTEAKISFIDYKDLDMLKHTLSERYKIMPRRLTGNSKKWQERVEVAIKRARHMALIPYIVDRKKVVDSPFKQH</sequence>